<proteinExistence type="inferred from homology"/>
<evidence type="ECO:0000255" key="1">
    <source>
        <dbReference type="HAMAP-Rule" id="MF_01849"/>
    </source>
</evidence>
<evidence type="ECO:0000255" key="2">
    <source>
        <dbReference type="PROSITE-ProRule" id="PRU01266"/>
    </source>
</evidence>
<comment type="function">
    <text evidence="1">Specifically methylates position 2 of adenine 2503 in 23S rRNA and position 2 of adenine 37 in tRNAs.</text>
</comment>
<comment type="catalytic activity">
    <reaction evidence="1">
        <text>adenosine(2503) in 23S rRNA + 2 reduced [2Fe-2S]-[ferredoxin] + 2 S-adenosyl-L-methionine = 2-methyladenosine(2503) in 23S rRNA + 5'-deoxyadenosine + L-methionine + 2 oxidized [2Fe-2S]-[ferredoxin] + S-adenosyl-L-homocysteine</text>
        <dbReference type="Rhea" id="RHEA:42916"/>
        <dbReference type="Rhea" id="RHEA-COMP:10000"/>
        <dbReference type="Rhea" id="RHEA-COMP:10001"/>
        <dbReference type="Rhea" id="RHEA-COMP:10152"/>
        <dbReference type="Rhea" id="RHEA-COMP:10282"/>
        <dbReference type="ChEBI" id="CHEBI:17319"/>
        <dbReference type="ChEBI" id="CHEBI:33737"/>
        <dbReference type="ChEBI" id="CHEBI:33738"/>
        <dbReference type="ChEBI" id="CHEBI:57844"/>
        <dbReference type="ChEBI" id="CHEBI:57856"/>
        <dbReference type="ChEBI" id="CHEBI:59789"/>
        <dbReference type="ChEBI" id="CHEBI:74411"/>
        <dbReference type="ChEBI" id="CHEBI:74497"/>
        <dbReference type="EC" id="2.1.1.192"/>
    </reaction>
</comment>
<comment type="catalytic activity">
    <reaction evidence="1">
        <text>adenosine(37) in tRNA + 2 reduced [2Fe-2S]-[ferredoxin] + 2 S-adenosyl-L-methionine = 2-methyladenosine(37) in tRNA + 5'-deoxyadenosine + L-methionine + 2 oxidized [2Fe-2S]-[ferredoxin] + S-adenosyl-L-homocysteine</text>
        <dbReference type="Rhea" id="RHEA:43332"/>
        <dbReference type="Rhea" id="RHEA-COMP:10000"/>
        <dbReference type="Rhea" id="RHEA-COMP:10001"/>
        <dbReference type="Rhea" id="RHEA-COMP:10162"/>
        <dbReference type="Rhea" id="RHEA-COMP:10485"/>
        <dbReference type="ChEBI" id="CHEBI:17319"/>
        <dbReference type="ChEBI" id="CHEBI:33737"/>
        <dbReference type="ChEBI" id="CHEBI:33738"/>
        <dbReference type="ChEBI" id="CHEBI:57844"/>
        <dbReference type="ChEBI" id="CHEBI:57856"/>
        <dbReference type="ChEBI" id="CHEBI:59789"/>
        <dbReference type="ChEBI" id="CHEBI:74411"/>
        <dbReference type="ChEBI" id="CHEBI:74497"/>
        <dbReference type="EC" id="2.1.1.192"/>
    </reaction>
</comment>
<comment type="cofactor">
    <cofactor evidence="1">
        <name>[4Fe-4S] cluster</name>
        <dbReference type="ChEBI" id="CHEBI:49883"/>
    </cofactor>
    <text evidence="1">Binds 1 [4Fe-4S] cluster. The cluster is coordinated with 3 cysteines and an exchangeable S-adenosyl-L-methionine.</text>
</comment>
<comment type="subcellular location">
    <subcellularLocation>
        <location evidence="1">Cytoplasm</location>
    </subcellularLocation>
</comment>
<comment type="miscellaneous">
    <text evidence="1">Reaction proceeds by a ping-pong mechanism involving intermediate methylation of a conserved cysteine residue.</text>
</comment>
<comment type="similarity">
    <text evidence="1">Belongs to the radical SAM superfamily. RlmN family.</text>
</comment>
<name>RLMN_PROM5</name>
<organism>
    <name type="scientific">Prochlorococcus marinus (strain MIT 9515)</name>
    <dbReference type="NCBI Taxonomy" id="167542"/>
    <lineage>
        <taxon>Bacteria</taxon>
        <taxon>Bacillati</taxon>
        <taxon>Cyanobacteriota</taxon>
        <taxon>Cyanophyceae</taxon>
        <taxon>Synechococcales</taxon>
        <taxon>Prochlorococcaceae</taxon>
        <taxon>Prochlorococcus</taxon>
    </lineage>
</organism>
<reference key="1">
    <citation type="journal article" date="2007" name="PLoS Genet.">
        <title>Patterns and implications of gene gain and loss in the evolution of Prochlorococcus.</title>
        <authorList>
            <person name="Kettler G.C."/>
            <person name="Martiny A.C."/>
            <person name="Huang K."/>
            <person name="Zucker J."/>
            <person name="Coleman M.L."/>
            <person name="Rodrigue S."/>
            <person name="Chen F."/>
            <person name="Lapidus A."/>
            <person name="Ferriera S."/>
            <person name="Johnson J."/>
            <person name="Steglich C."/>
            <person name="Church G.M."/>
            <person name="Richardson P."/>
            <person name="Chisholm S.W."/>
        </authorList>
    </citation>
    <scope>NUCLEOTIDE SEQUENCE [LARGE SCALE GENOMIC DNA]</scope>
    <source>
        <strain>MIT 9515</strain>
    </source>
</reference>
<sequence>MKNLLGCSVKDLENVALNYGQAAFRGRQIYSWLYNYKNRSKSIDEINVLPLNFRNQLKKEGFIFGELILKEKYLANDGTLKLLLNTRDNESVECVGIPTEKRLTACLSSQVGCPMDCKFCATGKEGLKRSLKASEILDQILFIENEMNQKVTNIVFMGMGEPLLNIDELLFSIRSINEDFDVSQRRITVSTVAIPNMIRKLSEMSFQVLGKCQFTLAISLHASNQKTRETIIPSAKNYHIKYIIDDCREFVKKTGRRVSFEYLMLHGVNDKLEHADELSNLIKGFQCHVNLIQYNQIEEVEFKQTPSKNAQLFQNRLSNNGINVSLRKSRGSDRNAACGQLRQNAKIK</sequence>
<protein>
    <recommendedName>
        <fullName evidence="1">Probable dual-specificity RNA methyltransferase RlmN</fullName>
        <ecNumber evidence="1">2.1.1.192</ecNumber>
    </recommendedName>
    <alternativeName>
        <fullName evidence="1">23S rRNA (adenine(2503)-C(2))-methyltransferase</fullName>
    </alternativeName>
    <alternativeName>
        <fullName evidence="1">23S rRNA m2A2503 methyltransferase</fullName>
    </alternativeName>
    <alternativeName>
        <fullName evidence="1">Ribosomal RNA large subunit methyltransferase N</fullName>
    </alternativeName>
    <alternativeName>
        <fullName evidence="1">tRNA (adenine(37)-C(2))-methyltransferase</fullName>
    </alternativeName>
    <alternativeName>
        <fullName evidence="1">tRNA m2A37 methyltransferase</fullName>
    </alternativeName>
</protein>
<feature type="chain" id="PRO_0000350320" description="Probable dual-specificity RNA methyltransferase RlmN">
    <location>
        <begin position="1"/>
        <end position="348"/>
    </location>
</feature>
<feature type="domain" description="Radical SAM core" evidence="2">
    <location>
        <begin position="99"/>
        <end position="333"/>
    </location>
</feature>
<feature type="active site" description="Proton acceptor" evidence="1">
    <location>
        <position position="93"/>
    </location>
</feature>
<feature type="active site" description="S-methylcysteine intermediate" evidence="1">
    <location>
        <position position="338"/>
    </location>
</feature>
<feature type="binding site" evidence="1">
    <location>
        <position position="113"/>
    </location>
    <ligand>
        <name>[4Fe-4S] cluster</name>
        <dbReference type="ChEBI" id="CHEBI:49883"/>
        <note>4Fe-4S-S-AdoMet</note>
    </ligand>
</feature>
<feature type="binding site" evidence="1">
    <location>
        <position position="117"/>
    </location>
    <ligand>
        <name>[4Fe-4S] cluster</name>
        <dbReference type="ChEBI" id="CHEBI:49883"/>
        <note>4Fe-4S-S-AdoMet</note>
    </ligand>
</feature>
<feature type="binding site" evidence="1">
    <location>
        <position position="120"/>
    </location>
    <ligand>
        <name>[4Fe-4S] cluster</name>
        <dbReference type="ChEBI" id="CHEBI:49883"/>
        <note>4Fe-4S-S-AdoMet</note>
    </ligand>
</feature>
<feature type="binding site" evidence="1">
    <location>
        <begin position="160"/>
        <end position="161"/>
    </location>
    <ligand>
        <name>S-adenosyl-L-methionine</name>
        <dbReference type="ChEBI" id="CHEBI:59789"/>
    </ligand>
</feature>
<feature type="binding site" evidence="1">
    <location>
        <position position="190"/>
    </location>
    <ligand>
        <name>S-adenosyl-L-methionine</name>
        <dbReference type="ChEBI" id="CHEBI:59789"/>
    </ligand>
</feature>
<feature type="binding site" evidence="1">
    <location>
        <begin position="219"/>
        <end position="221"/>
    </location>
    <ligand>
        <name>S-adenosyl-L-methionine</name>
        <dbReference type="ChEBI" id="CHEBI:59789"/>
    </ligand>
</feature>
<feature type="binding site" evidence="1">
    <location>
        <position position="295"/>
    </location>
    <ligand>
        <name>S-adenosyl-L-methionine</name>
        <dbReference type="ChEBI" id="CHEBI:59789"/>
    </ligand>
</feature>
<feature type="disulfide bond" description="(transient)" evidence="1">
    <location>
        <begin position="106"/>
        <end position="338"/>
    </location>
</feature>
<gene>
    <name evidence="1" type="primary">rlmN</name>
    <name type="ordered locus">P9515_16611</name>
</gene>
<accession>A2BYK7</accession>
<dbReference type="EC" id="2.1.1.192" evidence="1"/>
<dbReference type="EMBL" id="CP000552">
    <property type="protein sequence ID" value="ABM72868.1"/>
    <property type="molecule type" value="Genomic_DNA"/>
</dbReference>
<dbReference type="RefSeq" id="WP_011820962.1">
    <property type="nucleotide sequence ID" value="NC_008817.1"/>
</dbReference>
<dbReference type="SMR" id="A2BYK7"/>
<dbReference type="STRING" id="167542.P9515_16611"/>
<dbReference type="GeneID" id="60201041"/>
<dbReference type="KEGG" id="pmc:P9515_16611"/>
<dbReference type="eggNOG" id="COG0820">
    <property type="taxonomic scope" value="Bacteria"/>
</dbReference>
<dbReference type="HOGENOM" id="CLU_029101_1_1_3"/>
<dbReference type="OrthoDB" id="9793973at2"/>
<dbReference type="Proteomes" id="UP000001589">
    <property type="component" value="Chromosome"/>
</dbReference>
<dbReference type="GO" id="GO:0005737">
    <property type="term" value="C:cytoplasm"/>
    <property type="evidence" value="ECO:0007669"/>
    <property type="project" value="UniProtKB-SubCell"/>
</dbReference>
<dbReference type="GO" id="GO:0051539">
    <property type="term" value="F:4 iron, 4 sulfur cluster binding"/>
    <property type="evidence" value="ECO:0007669"/>
    <property type="project" value="UniProtKB-UniRule"/>
</dbReference>
<dbReference type="GO" id="GO:0046872">
    <property type="term" value="F:metal ion binding"/>
    <property type="evidence" value="ECO:0007669"/>
    <property type="project" value="UniProtKB-KW"/>
</dbReference>
<dbReference type="GO" id="GO:0070040">
    <property type="term" value="F:rRNA (adenine(2503)-C2-)-methyltransferase activity"/>
    <property type="evidence" value="ECO:0007669"/>
    <property type="project" value="UniProtKB-UniRule"/>
</dbReference>
<dbReference type="GO" id="GO:0019843">
    <property type="term" value="F:rRNA binding"/>
    <property type="evidence" value="ECO:0007669"/>
    <property type="project" value="UniProtKB-UniRule"/>
</dbReference>
<dbReference type="GO" id="GO:0002935">
    <property type="term" value="F:tRNA (adenine(37)-C2)-methyltransferase activity"/>
    <property type="evidence" value="ECO:0007669"/>
    <property type="project" value="UniProtKB-UniRule"/>
</dbReference>
<dbReference type="GO" id="GO:0000049">
    <property type="term" value="F:tRNA binding"/>
    <property type="evidence" value="ECO:0007669"/>
    <property type="project" value="UniProtKB-UniRule"/>
</dbReference>
<dbReference type="GO" id="GO:0070475">
    <property type="term" value="P:rRNA base methylation"/>
    <property type="evidence" value="ECO:0007669"/>
    <property type="project" value="UniProtKB-UniRule"/>
</dbReference>
<dbReference type="GO" id="GO:0030488">
    <property type="term" value="P:tRNA methylation"/>
    <property type="evidence" value="ECO:0007669"/>
    <property type="project" value="UniProtKB-UniRule"/>
</dbReference>
<dbReference type="CDD" id="cd01335">
    <property type="entry name" value="Radical_SAM"/>
    <property type="match status" value="1"/>
</dbReference>
<dbReference type="FunFam" id="3.20.20.70:FF:000014">
    <property type="entry name" value="Probable dual-specificity RNA methyltransferase RlmN"/>
    <property type="match status" value="1"/>
</dbReference>
<dbReference type="Gene3D" id="1.10.150.530">
    <property type="match status" value="1"/>
</dbReference>
<dbReference type="Gene3D" id="3.20.20.70">
    <property type="entry name" value="Aldolase class I"/>
    <property type="match status" value="1"/>
</dbReference>
<dbReference type="HAMAP" id="MF_01849">
    <property type="entry name" value="RNA_methyltr_RlmN"/>
    <property type="match status" value="1"/>
</dbReference>
<dbReference type="InterPro" id="IPR013785">
    <property type="entry name" value="Aldolase_TIM"/>
</dbReference>
<dbReference type="InterPro" id="IPR040072">
    <property type="entry name" value="Methyltransferase_A"/>
</dbReference>
<dbReference type="InterPro" id="IPR048641">
    <property type="entry name" value="RlmN_N"/>
</dbReference>
<dbReference type="InterPro" id="IPR027492">
    <property type="entry name" value="RNA_MTrfase_RlmN"/>
</dbReference>
<dbReference type="InterPro" id="IPR004383">
    <property type="entry name" value="rRNA_lsu_MTrfase_RlmN/Cfr"/>
</dbReference>
<dbReference type="InterPro" id="IPR007197">
    <property type="entry name" value="rSAM"/>
</dbReference>
<dbReference type="NCBIfam" id="TIGR00048">
    <property type="entry name" value="rRNA_mod_RlmN"/>
    <property type="match status" value="1"/>
</dbReference>
<dbReference type="PANTHER" id="PTHR30544">
    <property type="entry name" value="23S RRNA METHYLTRANSFERASE"/>
    <property type="match status" value="1"/>
</dbReference>
<dbReference type="PANTHER" id="PTHR30544:SF5">
    <property type="entry name" value="RADICAL SAM CORE DOMAIN-CONTAINING PROTEIN"/>
    <property type="match status" value="1"/>
</dbReference>
<dbReference type="Pfam" id="PF04055">
    <property type="entry name" value="Radical_SAM"/>
    <property type="match status" value="1"/>
</dbReference>
<dbReference type="Pfam" id="PF21016">
    <property type="entry name" value="RlmN_N"/>
    <property type="match status" value="1"/>
</dbReference>
<dbReference type="PIRSF" id="PIRSF006004">
    <property type="entry name" value="CHP00048"/>
    <property type="match status" value="1"/>
</dbReference>
<dbReference type="SFLD" id="SFLDF00275">
    <property type="entry name" value="adenosine_C2_methyltransferase"/>
    <property type="match status" value="1"/>
</dbReference>
<dbReference type="SFLD" id="SFLDS00029">
    <property type="entry name" value="Radical_SAM"/>
    <property type="match status" value="1"/>
</dbReference>
<dbReference type="SUPFAM" id="SSF102114">
    <property type="entry name" value="Radical SAM enzymes"/>
    <property type="match status" value="1"/>
</dbReference>
<dbReference type="PROSITE" id="PS51918">
    <property type="entry name" value="RADICAL_SAM"/>
    <property type="match status" value="1"/>
</dbReference>
<keyword id="KW-0004">4Fe-4S</keyword>
<keyword id="KW-0963">Cytoplasm</keyword>
<keyword id="KW-1015">Disulfide bond</keyword>
<keyword id="KW-0408">Iron</keyword>
<keyword id="KW-0411">Iron-sulfur</keyword>
<keyword id="KW-0479">Metal-binding</keyword>
<keyword id="KW-0489">Methyltransferase</keyword>
<keyword id="KW-0698">rRNA processing</keyword>
<keyword id="KW-0949">S-adenosyl-L-methionine</keyword>
<keyword id="KW-0808">Transferase</keyword>
<keyword id="KW-0819">tRNA processing</keyword>